<feature type="chain" id="PRO_0000197288" description="Metallothionein">
    <location>
        <begin position="1"/>
        <end position="60"/>
    </location>
</feature>
<feature type="region of interest" description="Beta">
    <location>
        <begin position="1"/>
        <end position="28"/>
    </location>
</feature>
<feature type="region of interest" description="Alpha">
    <location>
        <begin position="29"/>
        <end position="60"/>
    </location>
</feature>
<feature type="binding site" evidence="2">
    <location>
        <position position="4"/>
    </location>
    <ligand>
        <name>a divalent metal cation</name>
        <dbReference type="ChEBI" id="CHEBI:60240"/>
        <label>1</label>
        <note>in cluster B</note>
    </ligand>
</feature>
<feature type="binding site" evidence="2">
    <location>
        <position position="6"/>
    </location>
    <ligand>
        <name>a divalent metal cation</name>
        <dbReference type="ChEBI" id="CHEBI:60240"/>
        <label>1</label>
        <note>in cluster B</note>
    </ligand>
</feature>
<feature type="binding site" evidence="2">
    <location>
        <position position="6"/>
    </location>
    <ligand>
        <name>a divalent metal cation</name>
        <dbReference type="ChEBI" id="CHEBI:60240"/>
        <label>2</label>
        <note>in cluster B</note>
    </ligand>
</feature>
<feature type="binding site" evidence="2">
    <location>
        <position position="12"/>
    </location>
    <ligand>
        <name>a divalent metal cation</name>
        <dbReference type="ChEBI" id="CHEBI:60240"/>
        <label>2</label>
        <note>in cluster B</note>
    </ligand>
</feature>
<feature type="binding site" evidence="2">
    <location>
        <position position="14"/>
    </location>
    <ligand>
        <name>a divalent metal cation</name>
        <dbReference type="ChEBI" id="CHEBI:60240"/>
        <label>2</label>
        <note>in cluster B</note>
    </ligand>
</feature>
<feature type="binding site" evidence="2">
    <location>
        <position position="14"/>
    </location>
    <ligand>
        <name>a divalent metal cation</name>
        <dbReference type="ChEBI" id="CHEBI:60240"/>
        <label>3</label>
        <note>in cluster B</note>
    </ligand>
</feature>
<feature type="binding site" evidence="2">
    <location>
        <position position="18"/>
    </location>
    <ligand>
        <name>a divalent metal cation</name>
        <dbReference type="ChEBI" id="CHEBI:60240"/>
        <label>3</label>
        <note>in cluster B</note>
    </ligand>
</feature>
<feature type="binding site" evidence="2">
    <location>
        <position position="20"/>
    </location>
    <ligand>
        <name>a divalent metal cation</name>
        <dbReference type="ChEBI" id="CHEBI:60240"/>
        <label>1</label>
        <note>in cluster B</note>
    </ligand>
</feature>
<feature type="binding site" evidence="2">
    <location>
        <position position="23"/>
    </location>
    <ligand>
        <name>a divalent metal cation</name>
        <dbReference type="ChEBI" id="CHEBI:60240"/>
        <label>1</label>
        <note>in cluster B</note>
    </ligand>
</feature>
<feature type="binding site" evidence="2">
    <location>
        <position position="23"/>
    </location>
    <ligand>
        <name>a divalent metal cation</name>
        <dbReference type="ChEBI" id="CHEBI:60240"/>
        <label>3</label>
        <note>in cluster B</note>
    </ligand>
</feature>
<feature type="binding site" evidence="2">
    <location>
        <position position="25"/>
    </location>
    <ligand>
        <name>a divalent metal cation</name>
        <dbReference type="ChEBI" id="CHEBI:60240"/>
        <label>2</label>
        <note>in cluster B</note>
    </ligand>
</feature>
<feature type="binding site" evidence="2">
    <location>
        <position position="28"/>
    </location>
    <ligand>
        <name>a divalent metal cation</name>
        <dbReference type="ChEBI" id="CHEBI:60240"/>
        <label>3</label>
        <note>in cluster B</note>
    </ligand>
</feature>
<feature type="binding site" evidence="2">
    <location>
        <position position="32"/>
    </location>
    <ligand>
        <name>a divalent metal cation</name>
        <dbReference type="ChEBI" id="CHEBI:60240"/>
        <label>4</label>
        <note>in cluster A</note>
    </ligand>
</feature>
<feature type="binding site" evidence="2">
    <location>
        <position position="33"/>
    </location>
    <ligand>
        <name>a divalent metal cation</name>
        <dbReference type="ChEBI" id="CHEBI:60240"/>
        <label>4</label>
        <note>in cluster A</note>
    </ligand>
</feature>
<feature type="binding site" evidence="2">
    <location>
        <position position="33"/>
    </location>
    <ligand>
        <name>a divalent metal cation</name>
        <dbReference type="ChEBI" id="CHEBI:60240"/>
        <label>5</label>
        <note>in cluster A</note>
    </ligand>
</feature>
<feature type="binding site" evidence="2">
    <location>
        <position position="35"/>
    </location>
    <ligand>
        <name>a divalent metal cation</name>
        <dbReference type="ChEBI" id="CHEBI:60240"/>
        <label>5</label>
        <note>in cluster A</note>
    </ligand>
</feature>
<feature type="binding site" evidence="2">
    <location>
        <position position="36"/>
    </location>
    <ligand>
        <name>a divalent metal cation</name>
        <dbReference type="ChEBI" id="CHEBI:60240"/>
        <label>5</label>
        <note>in cluster A</note>
    </ligand>
</feature>
<feature type="binding site" evidence="2">
    <location>
        <position position="36"/>
    </location>
    <ligand>
        <name>a divalent metal cation</name>
        <dbReference type="ChEBI" id="CHEBI:60240"/>
        <label>6</label>
        <note>in cluster A</note>
    </ligand>
</feature>
<feature type="binding site" evidence="2">
    <location>
        <position position="40"/>
    </location>
    <ligand>
        <name>a divalent metal cation</name>
        <dbReference type="ChEBI" id="CHEBI:60240"/>
        <label>6</label>
        <note>in cluster A</note>
    </ligand>
</feature>
<feature type="binding site" evidence="2">
    <location>
        <position position="43"/>
    </location>
    <ligand>
        <name>a divalent metal cation</name>
        <dbReference type="ChEBI" id="CHEBI:60240"/>
        <label>4</label>
        <note>in cluster A</note>
    </ligand>
</feature>
<feature type="binding site" evidence="2">
    <location>
        <position position="43"/>
    </location>
    <ligand>
        <name>a divalent metal cation</name>
        <dbReference type="ChEBI" id="CHEBI:60240"/>
        <label>6</label>
        <note>in cluster A</note>
    </ligand>
</feature>
<feature type="binding site" evidence="2">
    <location>
        <position position="47"/>
    </location>
    <ligand>
        <name>a divalent metal cation</name>
        <dbReference type="ChEBI" id="CHEBI:60240"/>
        <label>4</label>
        <note>in cluster A</note>
    </ligand>
</feature>
<feature type="binding site" evidence="2">
    <location>
        <position position="49"/>
    </location>
    <ligand>
        <name>a divalent metal cation</name>
        <dbReference type="ChEBI" id="CHEBI:60240"/>
        <label>5</label>
        <note>in cluster A</note>
    </ligand>
</feature>
<feature type="binding site" evidence="2">
    <location>
        <position position="49"/>
    </location>
    <ligand>
        <name>a divalent metal cation</name>
        <dbReference type="ChEBI" id="CHEBI:60240"/>
        <label>7</label>
        <note>in cluster A</note>
    </ligand>
</feature>
<feature type="binding site" evidence="3">
    <location>
        <position position="54"/>
    </location>
    <ligand>
        <name>a divalent metal cation</name>
        <dbReference type="ChEBI" id="CHEBI:60240"/>
        <label>7</label>
        <note>in cluster A</note>
    </ligand>
</feature>
<feature type="binding site" evidence="2">
    <location>
        <position position="58"/>
    </location>
    <ligand>
        <name>a divalent metal cation</name>
        <dbReference type="ChEBI" id="CHEBI:60240"/>
        <label>7</label>
        <note>in cluster A</note>
    </ligand>
</feature>
<feature type="binding site" evidence="2">
    <location>
        <position position="59"/>
    </location>
    <ligand>
        <name>a divalent metal cation</name>
        <dbReference type="ChEBI" id="CHEBI:60240"/>
        <label>6</label>
        <note>in cluster A</note>
    </ligand>
</feature>
<feature type="binding site" evidence="2">
    <location>
        <position position="59"/>
    </location>
    <ligand>
        <name>a divalent metal cation</name>
        <dbReference type="ChEBI" id="CHEBI:60240"/>
        <label>7</label>
        <note>in cluster A</note>
    </ligand>
</feature>
<gene>
    <name type="primary">mt</name>
</gene>
<proteinExistence type="inferred from homology"/>
<reference key="1">
    <citation type="submission" date="1998-08" db="EMBL/GenBank/DDBJ databases">
        <title>Isolation and sequencing of a metallothionein complementary DNA clone from cadmium-treated channel catfish (Ictalurus punctatus).</title>
        <authorList>
            <person name="Schlenk D."/>
            <person name="El-Alfy A."/>
            <person name="Colley W.C."/>
        </authorList>
    </citation>
    <scope>NUCLEOTIDE SEQUENCE [MRNA]</scope>
    <source>
        <tissue>Liver</tissue>
    </source>
</reference>
<accession>O93571</accession>
<evidence type="ECO:0000250" key="1"/>
<evidence type="ECO:0000250" key="2">
    <source>
        <dbReference type="UniProtKB" id="P02795"/>
    </source>
</evidence>
<evidence type="ECO:0000250" key="3">
    <source>
        <dbReference type="UniProtKB" id="P62339"/>
    </source>
</evidence>
<evidence type="ECO:0000305" key="4"/>
<organism>
    <name type="scientific">Ictalurus punctatus</name>
    <name type="common">Channel catfish</name>
    <name type="synonym">Silurus punctatus</name>
    <dbReference type="NCBI Taxonomy" id="7998"/>
    <lineage>
        <taxon>Eukaryota</taxon>
        <taxon>Metazoa</taxon>
        <taxon>Chordata</taxon>
        <taxon>Craniata</taxon>
        <taxon>Vertebrata</taxon>
        <taxon>Euteleostomi</taxon>
        <taxon>Actinopterygii</taxon>
        <taxon>Neopterygii</taxon>
        <taxon>Teleostei</taxon>
        <taxon>Ostariophysi</taxon>
        <taxon>Siluriformes</taxon>
        <taxon>Ictaluridae</taxon>
        <taxon>Ictalurus</taxon>
    </lineage>
</organism>
<protein>
    <recommendedName>
        <fullName>Metallothionein</fullName>
        <shortName>MT</shortName>
    </recommendedName>
</protein>
<dbReference type="EMBL" id="AF087935">
    <property type="protein sequence ID" value="AAC36348.1"/>
    <property type="molecule type" value="mRNA"/>
</dbReference>
<dbReference type="RefSeq" id="NP_001187006.1">
    <property type="nucleotide sequence ID" value="NM_001200077.1"/>
</dbReference>
<dbReference type="SMR" id="O93571"/>
<dbReference type="STRING" id="7998.ENSIPUP00000028484"/>
<dbReference type="Ensembl" id="ENSIPUT00015041357">
    <property type="protein sequence ID" value="ENSIPUP00015035394"/>
    <property type="gene ID" value="ENSIPUG00015017484"/>
</dbReference>
<dbReference type="Ensembl" id="ENSIPUT00015085948">
    <property type="protein sequence ID" value="ENSIPUP00015074957"/>
    <property type="gene ID" value="ENSIPUG00015032844"/>
</dbReference>
<dbReference type="Ensembl" id="ENSIPUT00015091454">
    <property type="protein sequence ID" value="ENSIPUP00015078244"/>
    <property type="gene ID" value="ENSIPUG00015035186"/>
</dbReference>
<dbReference type="GeneID" id="100304478"/>
<dbReference type="KEGG" id="ipu:100304478"/>
<dbReference type="CTD" id="17750"/>
<dbReference type="OMA" id="CACTNCK"/>
<dbReference type="Proteomes" id="UP000221080">
    <property type="component" value="Chromosome 4"/>
</dbReference>
<dbReference type="GO" id="GO:0046872">
    <property type="term" value="F:metal ion binding"/>
    <property type="evidence" value="ECO:0007669"/>
    <property type="project" value="UniProtKB-KW"/>
</dbReference>
<dbReference type="FunFam" id="4.10.10.10:FF:000001">
    <property type="entry name" value="Metallothionein"/>
    <property type="match status" value="1"/>
</dbReference>
<dbReference type="Gene3D" id="4.10.10.10">
    <property type="entry name" value="Metallothionein Isoform II"/>
    <property type="match status" value="1"/>
</dbReference>
<dbReference type="InterPro" id="IPR017854">
    <property type="entry name" value="Metalthion_dom_sf"/>
</dbReference>
<dbReference type="InterPro" id="IPR023587">
    <property type="entry name" value="Metalthion_dom_sf_vert"/>
</dbReference>
<dbReference type="InterPro" id="IPR000006">
    <property type="entry name" value="Metalthion_vert"/>
</dbReference>
<dbReference type="InterPro" id="IPR018064">
    <property type="entry name" value="Metalthion_vert_metal_BS"/>
</dbReference>
<dbReference type="Pfam" id="PF00131">
    <property type="entry name" value="Metallothio"/>
    <property type="match status" value="1"/>
</dbReference>
<dbReference type="PRINTS" id="PR00860">
    <property type="entry name" value="MTVERTEBRATE"/>
</dbReference>
<dbReference type="SUPFAM" id="SSF57868">
    <property type="entry name" value="Metallothionein"/>
    <property type="match status" value="1"/>
</dbReference>
<dbReference type="PROSITE" id="PS00203">
    <property type="entry name" value="METALLOTHIONEIN_VRT"/>
    <property type="match status" value="1"/>
</dbReference>
<name>MT_ICTPU</name>
<comment type="function">
    <text evidence="1">Metallothioneins have a high content of cysteine residues that bind various heavy metals.</text>
</comment>
<comment type="domain">
    <text>Class I metallothioneins contain 2 metal-binding domains: four divalent ions are chelated within cluster A of the alpha domain and are coordinated via cysteinyl thiolate bridges to 11 cysteine ligands. Cluster B, the corresponding region within the beta domain, can ligate three divalent ions to 9 cysteines.</text>
</comment>
<comment type="similarity">
    <text evidence="4">Belongs to the metallothionein superfamily. Type 1 family.</text>
</comment>
<sequence>MDPCECSKTGTCNCGTSCKCSNCQCACCKKSCCSCCPSGCSKCASGCVCKGDTCDSKCCQ</sequence>
<keyword id="KW-0479">Metal-binding</keyword>
<keyword id="KW-0480">Metal-thiolate cluster</keyword>